<proteinExistence type="predicted"/>
<feature type="chain" id="PRO_0000165161" description="Uncharacterized 10.7 kDa protein in Gp54-alt intergenic region">
    <location>
        <begin position="1"/>
        <end position="96"/>
    </location>
</feature>
<accession>P39493</accession>
<reference key="1">
    <citation type="submission" date="1995-05" db="EMBL/GenBank/DDBJ databases">
        <authorList>
            <person name="Poglazov A."/>
            <person name="Porter D."/>
            <person name="Mesyanzhinov V.V."/>
            <person name="Kutter E.M."/>
        </authorList>
    </citation>
    <scope>NUCLEOTIDE SEQUENCE [GENOMIC DNA]</scope>
</reference>
<reference key="2">
    <citation type="journal article" date="2003" name="Microbiol. Mol. Biol. Rev.">
        <title>Bacteriophage T4 genome.</title>
        <authorList>
            <person name="Miller E.S."/>
            <person name="Kutter E."/>
            <person name="Mosig G."/>
            <person name="Arisaka F."/>
            <person name="Kunisawa T."/>
            <person name="Ruger W."/>
        </authorList>
    </citation>
    <scope>NUCLEOTIDE SEQUENCE [LARGE SCALE GENOMIC DNA]</scope>
</reference>
<dbReference type="EMBL" id="U27100">
    <property type="protein sequence ID" value="AAA75320.1"/>
    <property type="molecule type" value="Genomic_DNA"/>
</dbReference>
<dbReference type="EMBL" id="AF158101">
    <property type="protein sequence ID" value="AAD42536.1"/>
    <property type="molecule type" value="Genomic_DNA"/>
</dbReference>
<dbReference type="RefSeq" id="NP_049808.1">
    <property type="nucleotide sequence ID" value="NC_000866.4"/>
</dbReference>
<dbReference type="GeneID" id="1258565"/>
<dbReference type="KEGG" id="vg:1258565"/>
<dbReference type="OrthoDB" id="17323at10239"/>
<dbReference type="Proteomes" id="UP000009087">
    <property type="component" value="Segment"/>
</dbReference>
<dbReference type="InterPro" id="IPR035134">
    <property type="entry name" value="DUF5498"/>
</dbReference>
<dbReference type="Pfam" id="PF17602">
    <property type="entry name" value="DUF5498"/>
    <property type="match status" value="1"/>
</dbReference>
<sequence length="96" mass="10704">MKSSLRFLGQELVVEGVIPADNAFNEAVYDEFIKIFGTDKKFGIFPSENFSKPEQTESIFQGVVTGKFESEAPVKIEVYIEDSLVASVAAFISFRK</sequence>
<name>Y12A_BPT4</name>
<protein>
    <recommendedName>
        <fullName>Uncharacterized 10.7 kDa protein in Gp54-alt intergenic region</fullName>
    </recommendedName>
</protein>
<organism>
    <name type="scientific">Enterobacteria phage T4</name>
    <name type="common">Bacteriophage T4</name>
    <dbReference type="NCBI Taxonomy" id="10665"/>
    <lineage>
        <taxon>Viruses</taxon>
        <taxon>Duplodnaviria</taxon>
        <taxon>Heunggongvirae</taxon>
        <taxon>Uroviricota</taxon>
        <taxon>Caudoviricetes</taxon>
        <taxon>Straboviridae</taxon>
        <taxon>Tevenvirinae</taxon>
        <taxon>Tequatrovirus</taxon>
    </lineage>
</organism>
<keyword id="KW-1185">Reference proteome</keyword>
<gene>
    <name type="primary">y12A</name>
    <name type="synonym">alt.-3</name>
</gene>
<organismHost>
    <name type="scientific">Escherichia coli</name>
    <dbReference type="NCBI Taxonomy" id="562"/>
</organismHost>